<comment type="function">
    <text evidence="1">Proton-coupled chloride transporter. Functions as antiport system and exchanges two chloride ions for 1 proton. Probably acts as an electrical shunt for an outwardly-directed proton pump that is linked to amino acid decarboxylation, as part of the extreme acid resistance (XAR) response.</text>
</comment>
<comment type="catalytic activity">
    <reaction evidence="1">
        <text>2 chloride(in) + H(+)(out) = 2 chloride(out) + H(+)(in)</text>
        <dbReference type="Rhea" id="RHEA:29567"/>
        <dbReference type="ChEBI" id="CHEBI:15378"/>
        <dbReference type="ChEBI" id="CHEBI:17996"/>
    </reaction>
</comment>
<comment type="subunit">
    <text evidence="1">Homodimer.</text>
</comment>
<comment type="subcellular location">
    <subcellularLocation>
        <location evidence="1">Cell inner membrane</location>
        <topology evidence="1">Multi-pass membrane protein</topology>
    </subcellularLocation>
</comment>
<comment type="similarity">
    <text evidence="1">Belongs to the chloride channel (TC 2.A.49) family. ClcA subfamily.</text>
</comment>
<evidence type="ECO:0000255" key="1">
    <source>
        <dbReference type="HAMAP-Rule" id="MF_01128"/>
    </source>
</evidence>
<reference key="1">
    <citation type="submission" date="2007-08" db="EMBL/GenBank/DDBJ databases">
        <authorList>
            <consortium name="The Vibrio harveyi Genome Sequencing Project"/>
            <person name="Bassler B."/>
            <person name="Clifton S.W."/>
            <person name="Fulton L."/>
            <person name="Delehaunty K."/>
            <person name="Fronick C."/>
            <person name="Harrison M."/>
            <person name="Markivic C."/>
            <person name="Fulton R."/>
            <person name="Tin-Wollam A.-M."/>
            <person name="Shah N."/>
            <person name="Pepin K."/>
            <person name="Nash W."/>
            <person name="Thiruvilangam P."/>
            <person name="Bhonagiri V."/>
            <person name="Waters C."/>
            <person name="Tu K.C."/>
            <person name="Irgon J."/>
            <person name="Wilson R.K."/>
        </authorList>
    </citation>
    <scope>NUCLEOTIDE SEQUENCE [LARGE SCALE GENOMIC DNA]</scope>
    <source>
        <strain>ATCC BAA-1116 / BB120</strain>
    </source>
</reference>
<feature type="chain" id="PRO_1000065381" description="H(+)/Cl(-) exchange transporter ClcA">
    <location>
        <begin position="1"/>
        <end position="468"/>
    </location>
</feature>
<feature type="topological domain" description="Cytoplasmic" evidence="1">
    <location>
        <begin position="1"/>
        <end position="32"/>
    </location>
</feature>
<feature type="transmembrane region" description="Helical" evidence="1">
    <location>
        <begin position="33"/>
        <end position="69"/>
    </location>
</feature>
<feature type="topological domain" description="Periplasmic" evidence="1">
    <location>
        <begin position="70"/>
        <end position="76"/>
    </location>
</feature>
<feature type="transmembrane region" description="Helical" evidence="1">
    <location>
        <begin position="77"/>
        <end position="100"/>
    </location>
</feature>
<feature type="intramembrane region" description="Helical" evidence="1">
    <location>
        <begin position="109"/>
        <end position="116"/>
    </location>
</feature>
<feature type="topological domain" description="Cytoplasmic" evidence="1">
    <location>
        <begin position="117"/>
        <end position="123"/>
    </location>
</feature>
<feature type="transmembrane region" description="Helical" evidence="1">
    <location>
        <begin position="124"/>
        <end position="141"/>
    </location>
</feature>
<feature type="transmembrane region" description="Helical" evidence="1">
    <location>
        <begin position="148"/>
        <end position="166"/>
    </location>
</feature>
<feature type="topological domain" description="Cytoplasmic" evidence="1">
    <location>
        <begin position="167"/>
        <end position="176"/>
    </location>
</feature>
<feature type="intramembrane region" description="Helical" evidence="1">
    <location>
        <begin position="177"/>
        <end position="189"/>
    </location>
</feature>
<feature type="intramembrane region" description="Helical" evidence="1">
    <location>
        <begin position="193"/>
        <end position="201"/>
    </location>
</feature>
<feature type="topological domain" description="Cytoplasmic" evidence="1">
    <location>
        <begin position="202"/>
        <end position="214"/>
    </location>
</feature>
<feature type="transmembrane region" description="Helical" evidence="1">
    <location>
        <begin position="215"/>
        <end position="232"/>
    </location>
</feature>
<feature type="topological domain" description="Periplasmic" evidence="1">
    <location>
        <begin position="233"/>
        <end position="252"/>
    </location>
</feature>
<feature type="transmembrane region" description="Helical" evidence="1">
    <location>
        <begin position="253"/>
        <end position="281"/>
    </location>
</feature>
<feature type="topological domain" description="Cytoplasmic" evidence="1">
    <location>
        <begin position="282"/>
        <end position="287"/>
    </location>
</feature>
<feature type="transmembrane region" description="Helical" evidence="1">
    <location>
        <begin position="288"/>
        <end position="309"/>
    </location>
</feature>
<feature type="topological domain" description="Periplasmic" evidence="1">
    <location>
        <begin position="310"/>
        <end position="329"/>
    </location>
</feature>
<feature type="transmembrane region" description="Helical" evidence="1">
    <location>
        <begin position="330"/>
        <end position="349"/>
    </location>
</feature>
<feature type="transmembrane region" description="Helical" evidence="1">
    <location>
        <begin position="355"/>
        <end position="376"/>
    </location>
</feature>
<feature type="topological domain" description="Periplasmic" evidence="1">
    <location>
        <begin position="377"/>
        <end position="386"/>
    </location>
</feature>
<feature type="intramembrane region" description="Helical" evidence="1">
    <location>
        <begin position="387"/>
        <end position="401"/>
    </location>
</feature>
<feature type="intramembrane region" description="Note=Loop between two helices" evidence="1">
    <location>
        <begin position="402"/>
        <end position="404"/>
    </location>
</feature>
<feature type="intramembrane region" description="Helical" evidence="1">
    <location>
        <begin position="405"/>
        <end position="416"/>
    </location>
</feature>
<feature type="intramembrane region" description="Note=Loop between two helices" evidence="1">
    <location>
        <begin position="417"/>
        <end position="421"/>
    </location>
</feature>
<feature type="transmembrane region" description="Helical" evidence="1">
    <location>
        <begin position="422"/>
        <end position="438"/>
    </location>
</feature>
<feature type="topological domain" description="Cytoplasmic" evidence="1">
    <location>
        <begin position="439"/>
        <end position="468"/>
    </location>
</feature>
<feature type="short sequence motif" description="Selectivity filter part_1" evidence="1">
    <location>
        <begin position="106"/>
        <end position="110"/>
    </location>
</feature>
<feature type="short sequence motif" description="Selectivity filter part_2" evidence="1">
    <location>
        <begin position="146"/>
        <end position="150"/>
    </location>
</feature>
<feature type="short sequence motif" description="Selectivity filter part_3" evidence="1">
    <location>
        <begin position="355"/>
        <end position="359"/>
    </location>
</feature>
<feature type="binding site" evidence="1">
    <location>
        <position position="107"/>
    </location>
    <ligand>
        <name>chloride</name>
        <dbReference type="ChEBI" id="CHEBI:17996"/>
    </ligand>
</feature>
<feature type="binding site" evidence="1">
    <location>
        <position position="356"/>
    </location>
    <ligand>
        <name>chloride</name>
        <dbReference type="ChEBI" id="CHEBI:17996"/>
    </ligand>
</feature>
<feature type="binding site" evidence="1">
    <location>
        <position position="357"/>
    </location>
    <ligand>
        <name>chloride</name>
        <dbReference type="ChEBI" id="CHEBI:17996"/>
    </ligand>
</feature>
<feature type="binding site" evidence="1">
    <location>
        <position position="445"/>
    </location>
    <ligand>
        <name>chloride</name>
        <dbReference type="ChEBI" id="CHEBI:17996"/>
    </ligand>
</feature>
<feature type="site" description="Mediates proton transfer from the outer aqueous phase to the interior of the protein; involved in linking H(+) and Cl(-) transport" evidence="1">
    <location>
        <position position="148"/>
    </location>
</feature>
<feature type="site" description="Mediates proton transfer from the protein to the inner aqueous phase" evidence="1">
    <location>
        <position position="203"/>
    </location>
</feature>
<organism>
    <name type="scientific">Vibrio campbellii (strain ATCC BAA-1116)</name>
    <dbReference type="NCBI Taxonomy" id="2902295"/>
    <lineage>
        <taxon>Bacteria</taxon>
        <taxon>Pseudomonadati</taxon>
        <taxon>Pseudomonadota</taxon>
        <taxon>Gammaproteobacteria</taxon>
        <taxon>Vibrionales</taxon>
        <taxon>Vibrionaceae</taxon>
        <taxon>Vibrio</taxon>
    </lineage>
</organism>
<keyword id="KW-0050">Antiport</keyword>
<keyword id="KW-0997">Cell inner membrane</keyword>
<keyword id="KW-1003">Cell membrane</keyword>
<keyword id="KW-0868">Chloride</keyword>
<keyword id="KW-0406">Ion transport</keyword>
<keyword id="KW-0472">Membrane</keyword>
<keyword id="KW-0812">Transmembrane</keyword>
<keyword id="KW-1133">Transmembrane helix</keyword>
<keyword id="KW-0813">Transport</keyword>
<name>CLCA_VIBC1</name>
<gene>
    <name evidence="1" type="primary">clcA</name>
    <name type="ordered locus">VIBHAR_06233</name>
</gene>
<proteinExistence type="inferred from homology"/>
<sequence>MIKRERIVKSVLAHVPKDAINQFVSRGSTPTSFSVLFMAAIVGTLAGLVGTYFEIAVHFVSETRTEWLKSEIGSVLPLWLAAILISGALAFIGYYLVNRFAPEASGSGIPEIEGAMDNIRSVRWWRVIPVKFFGGMGALGSGMVLGREGPTVQMGGAVGRMVTDIFRVKDDDTRHSLLASGAAGGLAAAFNAPLAAIMFVVEEMRPQFRYSLISIRAVIISAIMANIVFRAINGQEAVITMPQYQSPELQSLWLFLLLGSLFGVFGVVFNKLITIAQDSFVALHKNDRKRYLITGTILGGVFGLLLLYVPQLTGGGIGLIPDITNGNYSISILVMLFVGRVITTLLCFGSGAPGGIFAPMLALGTLFGYAFGASADMLLPSLTIEPGVFAIAGMGALFAATVRAPITGILLVIEMTNNYYLILPLIITSLGAVIVAQLLGGQPIYSQLLHRTLKNDKLRQQDLPENQA</sequence>
<dbReference type="EMBL" id="CP000790">
    <property type="protein sequence ID" value="ABU74125.1"/>
    <property type="molecule type" value="Genomic_DNA"/>
</dbReference>
<dbReference type="RefSeq" id="WP_012129713.1">
    <property type="nucleotide sequence ID" value="NC_009784.1"/>
</dbReference>
<dbReference type="SMR" id="A7N6K9"/>
<dbReference type="KEGG" id="vha:VIBHAR_06233"/>
<dbReference type="PATRIC" id="fig|338187.25.peg.4105"/>
<dbReference type="Proteomes" id="UP000008152">
    <property type="component" value="Chromosome II"/>
</dbReference>
<dbReference type="GO" id="GO:0005886">
    <property type="term" value="C:plasma membrane"/>
    <property type="evidence" value="ECO:0007669"/>
    <property type="project" value="UniProtKB-SubCell"/>
</dbReference>
<dbReference type="GO" id="GO:0015297">
    <property type="term" value="F:antiporter activity"/>
    <property type="evidence" value="ECO:0007669"/>
    <property type="project" value="UniProtKB-UniRule"/>
</dbReference>
<dbReference type="GO" id="GO:0005247">
    <property type="term" value="F:voltage-gated chloride channel activity"/>
    <property type="evidence" value="ECO:0007669"/>
    <property type="project" value="TreeGrafter"/>
</dbReference>
<dbReference type="CDD" id="cd01031">
    <property type="entry name" value="EriC"/>
    <property type="match status" value="1"/>
</dbReference>
<dbReference type="Gene3D" id="1.10.3080.10">
    <property type="entry name" value="Clc chloride channel"/>
    <property type="match status" value="1"/>
</dbReference>
<dbReference type="HAMAP" id="MF_01128">
    <property type="entry name" value="CLC_ClcA"/>
    <property type="match status" value="1"/>
</dbReference>
<dbReference type="InterPro" id="IPR023861">
    <property type="entry name" value="Cl-channel_ClcA"/>
</dbReference>
<dbReference type="InterPro" id="IPR014743">
    <property type="entry name" value="Cl-channel_core"/>
</dbReference>
<dbReference type="InterPro" id="IPR001807">
    <property type="entry name" value="ClC"/>
</dbReference>
<dbReference type="NCBIfam" id="NF003640">
    <property type="entry name" value="PRK05277.1"/>
    <property type="match status" value="1"/>
</dbReference>
<dbReference type="PANTHER" id="PTHR45711">
    <property type="entry name" value="CHLORIDE CHANNEL PROTEIN"/>
    <property type="match status" value="1"/>
</dbReference>
<dbReference type="PANTHER" id="PTHR45711:SF6">
    <property type="entry name" value="CHLORIDE CHANNEL PROTEIN"/>
    <property type="match status" value="1"/>
</dbReference>
<dbReference type="Pfam" id="PF00654">
    <property type="entry name" value="Voltage_CLC"/>
    <property type="match status" value="1"/>
</dbReference>
<dbReference type="PRINTS" id="PR00762">
    <property type="entry name" value="CLCHANNEL"/>
</dbReference>
<dbReference type="SUPFAM" id="SSF81340">
    <property type="entry name" value="Clc chloride channel"/>
    <property type="match status" value="1"/>
</dbReference>
<protein>
    <recommendedName>
        <fullName evidence="1">H(+)/Cl(-) exchange transporter ClcA</fullName>
    </recommendedName>
</protein>
<accession>A7N6K9</accession>